<reference key="1">
    <citation type="journal article" date="2007" name="Plant Cell">
        <title>Dothideomycete-plant interactions illuminated by genome sequencing and EST analysis of the wheat pathogen Stagonospora nodorum.</title>
        <authorList>
            <person name="Hane J.K."/>
            <person name="Lowe R.G.T."/>
            <person name="Solomon P.S."/>
            <person name="Tan K.-C."/>
            <person name="Schoch C.L."/>
            <person name="Spatafora J.W."/>
            <person name="Crous P.W."/>
            <person name="Kodira C.D."/>
            <person name="Birren B.W."/>
            <person name="Galagan J.E."/>
            <person name="Torriani S.F.F."/>
            <person name="McDonald B.A."/>
            <person name="Oliver R.P."/>
        </authorList>
    </citation>
    <scope>NUCLEOTIDE SEQUENCE [LARGE SCALE GENOMIC DNA]</scope>
    <source>
        <strain>SN15 / ATCC MYA-4574 / FGSC 10173</strain>
    </source>
</reference>
<organism>
    <name type="scientific">Phaeosphaeria nodorum (strain SN15 / ATCC MYA-4574 / FGSC 10173)</name>
    <name type="common">Glume blotch fungus</name>
    <name type="synonym">Parastagonospora nodorum</name>
    <dbReference type="NCBI Taxonomy" id="321614"/>
    <lineage>
        <taxon>Eukaryota</taxon>
        <taxon>Fungi</taxon>
        <taxon>Dikarya</taxon>
        <taxon>Ascomycota</taxon>
        <taxon>Pezizomycotina</taxon>
        <taxon>Dothideomycetes</taxon>
        <taxon>Pleosporomycetidae</taxon>
        <taxon>Pleosporales</taxon>
        <taxon>Pleosporineae</taxon>
        <taxon>Phaeosphaeriaceae</taxon>
        <taxon>Parastagonospora</taxon>
    </lineage>
</organism>
<gene>
    <name type="primary">COX23</name>
    <name type="ORF">SNOG_03913</name>
</gene>
<proteinExistence type="inferred from homology"/>
<comment type="function">
    <text evidence="2">Required for the assembly of cytochrome c oxidase.</text>
</comment>
<comment type="subcellular location">
    <subcellularLocation>
        <location evidence="1">Mitochondrion intermembrane space</location>
    </subcellularLocation>
</comment>
<comment type="similarity">
    <text evidence="6">Belongs to the COX23 family.</text>
</comment>
<comment type="sequence caution" evidence="6">
    <conflict type="erroneous gene model prediction">
        <sequence resource="EMBL-CDS" id="EAT89118"/>
    </conflict>
</comment>
<sequence>MSNKPAPKSEDKAEEWSGPAATRFDKYAATQPHKAYSEYFDPCQEAADKSIRCLKRNGGERAMCTDFFQAYRDCKEQWQNARKEARRNTSWFGK</sequence>
<name>COX23_PHANO</name>
<keyword id="KW-1015">Disulfide bond</keyword>
<keyword id="KW-0496">Mitochondrion</keyword>
<keyword id="KW-0809">Transit peptide</keyword>
<evidence type="ECO:0000250" key="1"/>
<evidence type="ECO:0000250" key="2">
    <source>
        <dbReference type="UniProtKB" id="P38824"/>
    </source>
</evidence>
<evidence type="ECO:0000255" key="3"/>
<evidence type="ECO:0000255" key="4">
    <source>
        <dbReference type="PROSITE-ProRule" id="PRU01150"/>
    </source>
</evidence>
<evidence type="ECO:0000256" key="5">
    <source>
        <dbReference type="SAM" id="MobiDB-lite"/>
    </source>
</evidence>
<evidence type="ECO:0000305" key="6"/>
<dbReference type="EMBL" id="CH445329">
    <property type="protein sequence ID" value="EAT89118.2"/>
    <property type="status" value="ALT_SEQ"/>
    <property type="molecule type" value="Genomic_DNA"/>
</dbReference>
<dbReference type="RefSeq" id="XP_001794458.1">
    <property type="nucleotide sequence ID" value="XM_001794406.1"/>
</dbReference>
<dbReference type="SMR" id="Q0UWF1"/>
<dbReference type="STRING" id="321614.Q0UWF1"/>
<dbReference type="GeneID" id="5971321"/>
<dbReference type="KEGG" id="pno:SNOG_03913"/>
<dbReference type="VEuPathDB" id="FungiDB:JI435_039130"/>
<dbReference type="InParanoid" id="Q0UWF1"/>
<dbReference type="OMA" id="GGDRDMC"/>
<dbReference type="Proteomes" id="UP000001055">
    <property type="component" value="Unassembled WGS sequence"/>
</dbReference>
<dbReference type="GO" id="GO:0005758">
    <property type="term" value="C:mitochondrial intermembrane space"/>
    <property type="evidence" value="ECO:0007669"/>
    <property type="project" value="UniProtKB-SubCell"/>
</dbReference>
<dbReference type="GO" id="GO:0005739">
    <property type="term" value="C:mitochondrion"/>
    <property type="evidence" value="ECO:0000318"/>
    <property type="project" value="GO_Central"/>
</dbReference>
<dbReference type="GO" id="GO:0033108">
    <property type="term" value="P:mitochondrial respiratory chain complex assembly"/>
    <property type="evidence" value="ECO:0000318"/>
    <property type="project" value="GO_Central"/>
</dbReference>
<dbReference type="Gene3D" id="1.10.287.1130">
    <property type="entry name" value="CytochromE C oxidase copper chaperone"/>
    <property type="match status" value="1"/>
</dbReference>
<dbReference type="InterPro" id="IPR051040">
    <property type="entry name" value="COX23"/>
</dbReference>
<dbReference type="InterPro" id="IPR009069">
    <property type="entry name" value="Cys_alpha_HP_mot_SF"/>
</dbReference>
<dbReference type="PANTHER" id="PTHR46811">
    <property type="entry name" value="COILED-COIL-HELIX-COILED-COIL-HELIX DOMAIN-CONTAINING PROTEIN 7"/>
    <property type="match status" value="1"/>
</dbReference>
<dbReference type="PANTHER" id="PTHR46811:SF1">
    <property type="entry name" value="COILED-COIL-HELIX-COILED-COIL-HELIX DOMAIN-CONTAINING PROTEIN 7"/>
    <property type="match status" value="1"/>
</dbReference>
<dbReference type="SUPFAM" id="SSF47072">
    <property type="entry name" value="Cysteine alpha-hairpin motif"/>
    <property type="match status" value="1"/>
</dbReference>
<dbReference type="PROSITE" id="PS51808">
    <property type="entry name" value="CHCH"/>
    <property type="match status" value="1"/>
</dbReference>
<protein>
    <recommendedName>
        <fullName>Cytochrome c oxidase-assembly factor COX23, mitochondrial</fullName>
    </recommendedName>
</protein>
<feature type="transit peptide" description="Mitochondrion" evidence="3">
    <location>
        <begin position="1"/>
        <end status="unknown"/>
    </location>
</feature>
<feature type="chain" id="PRO_0000280667" description="Cytochrome c oxidase-assembly factor COX23, mitochondrial">
    <location>
        <begin status="unknown"/>
        <end position="94"/>
    </location>
</feature>
<feature type="domain" description="CHCH" evidence="4">
    <location>
        <begin position="40"/>
        <end position="82"/>
    </location>
</feature>
<feature type="region of interest" description="Disordered" evidence="5">
    <location>
        <begin position="1"/>
        <end position="21"/>
    </location>
</feature>
<feature type="short sequence motif" description="Cx9C motif 1" evidence="4">
    <location>
        <begin position="43"/>
        <end position="53"/>
    </location>
</feature>
<feature type="short sequence motif" description="Cx9C motif 2" evidence="4">
    <location>
        <begin position="64"/>
        <end position="74"/>
    </location>
</feature>
<feature type="disulfide bond" evidence="4">
    <location>
        <begin position="43"/>
        <end position="74"/>
    </location>
</feature>
<feature type="disulfide bond" evidence="4">
    <location>
        <begin position="53"/>
        <end position="64"/>
    </location>
</feature>
<accession>Q0UWF1</accession>